<evidence type="ECO:0000255" key="1">
    <source>
        <dbReference type="HAMAP-Rule" id="MF_00120"/>
    </source>
</evidence>
<gene>
    <name evidence="1" type="primary">gatA</name>
    <name type="ordered locus">BB4531</name>
</gene>
<accession>Q7WEV1</accession>
<dbReference type="EC" id="6.3.5.7" evidence="1"/>
<dbReference type="EMBL" id="BX640450">
    <property type="protein sequence ID" value="CAE34894.1"/>
    <property type="molecule type" value="Genomic_DNA"/>
</dbReference>
<dbReference type="RefSeq" id="WP_010927141.1">
    <property type="nucleotide sequence ID" value="NC_002927.3"/>
</dbReference>
<dbReference type="SMR" id="Q7WEV1"/>
<dbReference type="GeneID" id="56476970"/>
<dbReference type="KEGG" id="bbr:BB4531"/>
<dbReference type="eggNOG" id="COG0154">
    <property type="taxonomic scope" value="Bacteria"/>
</dbReference>
<dbReference type="HOGENOM" id="CLU_009600_0_3_4"/>
<dbReference type="Proteomes" id="UP000001027">
    <property type="component" value="Chromosome"/>
</dbReference>
<dbReference type="GO" id="GO:0030956">
    <property type="term" value="C:glutamyl-tRNA(Gln) amidotransferase complex"/>
    <property type="evidence" value="ECO:0007669"/>
    <property type="project" value="InterPro"/>
</dbReference>
<dbReference type="GO" id="GO:0005524">
    <property type="term" value="F:ATP binding"/>
    <property type="evidence" value="ECO:0007669"/>
    <property type="project" value="UniProtKB-KW"/>
</dbReference>
<dbReference type="GO" id="GO:0050567">
    <property type="term" value="F:glutaminyl-tRNA synthase (glutamine-hydrolyzing) activity"/>
    <property type="evidence" value="ECO:0007669"/>
    <property type="project" value="UniProtKB-UniRule"/>
</dbReference>
<dbReference type="GO" id="GO:0006412">
    <property type="term" value="P:translation"/>
    <property type="evidence" value="ECO:0007669"/>
    <property type="project" value="UniProtKB-UniRule"/>
</dbReference>
<dbReference type="Gene3D" id="3.90.1300.10">
    <property type="entry name" value="Amidase signature (AS) domain"/>
    <property type="match status" value="1"/>
</dbReference>
<dbReference type="HAMAP" id="MF_00120">
    <property type="entry name" value="GatA"/>
    <property type="match status" value="1"/>
</dbReference>
<dbReference type="InterPro" id="IPR000120">
    <property type="entry name" value="Amidase"/>
</dbReference>
<dbReference type="InterPro" id="IPR020556">
    <property type="entry name" value="Amidase_CS"/>
</dbReference>
<dbReference type="InterPro" id="IPR023631">
    <property type="entry name" value="Amidase_dom"/>
</dbReference>
<dbReference type="InterPro" id="IPR036928">
    <property type="entry name" value="AS_sf"/>
</dbReference>
<dbReference type="InterPro" id="IPR004412">
    <property type="entry name" value="GatA"/>
</dbReference>
<dbReference type="NCBIfam" id="TIGR00132">
    <property type="entry name" value="gatA"/>
    <property type="match status" value="1"/>
</dbReference>
<dbReference type="PANTHER" id="PTHR11895:SF151">
    <property type="entry name" value="GLUTAMYL-TRNA(GLN) AMIDOTRANSFERASE SUBUNIT A"/>
    <property type="match status" value="1"/>
</dbReference>
<dbReference type="PANTHER" id="PTHR11895">
    <property type="entry name" value="TRANSAMIDASE"/>
    <property type="match status" value="1"/>
</dbReference>
<dbReference type="Pfam" id="PF01425">
    <property type="entry name" value="Amidase"/>
    <property type="match status" value="1"/>
</dbReference>
<dbReference type="SUPFAM" id="SSF75304">
    <property type="entry name" value="Amidase signature (AS) enzymes"/>
    <property type="match status" value="1"/>
</dbReference>
<dbReference type="PROSITE" id="PS00571">
    <property type="entry name" value="AMIDASES"/>
    <property type="match status" value="1"/>
</dbReference>
<protein>
    <recommendedName>
        <fullName evidence="1">Glutamyl-tRNA(Gln) amidotransferase subunit A</fullName>
        <shortName evidence="1">Glu-ADT subunit A</shortName>
        <ecNumber evidence="1">6.3.5.7</ecNumber>
    </recommendedName>
</protein>
<proteinExistence type="inferred from homology"/>
<keyword id="KW-0067">ATP-binding</keyword>
<keyword id="KW-0436">Ligase</keyword>
<keyword id="KW-0547">Nucleotide-binding</keyword>
<keyword id="KW-0648">Protein biosynthesis</keyword>
<reference key="1">
    <citation type="journal article" date="2003" name="Nat. Genet.">
        <title>Comparative analysis of the genome sequences of Bordetella pertussis, Bordetella parapertussis and Bordetella bronchiseptica.</title>
        <authorList>
            <person name="Parkhill J."/>
            <person name="Sebaihia M."/>
            <person name="Preston A."/>
            <person name="Murphy L.D."/>
            <person name="Thomson N.R."/>
            <person name="Harris D.E."/>
            <person name="Holden M.T.G."/>
            <person name="Churcher C.M."/>
            <person name="Bentley S.D."/>
            <person name="Mungall K.L."/>
            <person name="Cerdeno-Tarraga A.-M."/>
            <person name="Temple L."/>
            <person name="James K.D."/>
            <person name="Harris B."/>
            <person name="Quail M.A."/>
            <person name="Achtman M."/>
            <person name="Atkin R."/>
            <person name="Baker S."/>
            <person name="Basham D."/>
            <person name="Bason N."/>
            <person name="Cherevach I."/>
            <person name="Chillingworth T."/>
            <person name="Collins M."/>
            <person name="Cronin A."/>
            <person name="Davis P."/>
            <person name="Doggett J."/>
            <person name="Feltwell T."/>
            <person name="Goble A."/>
            <person name="Hamlin N."/>
            <person name="Hauser H."/>
            <person name="Holroyd S."/>
            <person name="Jagels K."/>
            <person name="Leather S."/>
            <person name="Moule S."/>
            <person name="Norberczak H."/>
            <person name="O'Neil S."/>
            <person name="Ormond D."/>
            <person name="Price C."/>
            <person name="Rabbinowitsch E."/>
            <person name="Rutter S."/>
            <person name="Sanders M."/>
            <person name="Saunders D."/>
            <person name="Seeger K."/>
            <person name="Sharp S."/>
            <person name="Simmonds M."/>
            <person name="Skelton J."/>
            <person name="Squares R."/>
            <person name="Squares S."/>
            <person name="Stevens K."/>
            <person name="Unwin L."/>
            <person name="Whitehead S."/>
            <person name="Barrell B.G."/>
            <person name="Maskell D.J."/>
        </authorList>
    </citation>
    <scope>NUCLEOTIDE SEQUENCE [LARGE SCALE GENOMIC DNA]</scope>
    <source>
        <strain>ATCC BAA-588 / NCTC 13252 / RB50</strain>
    </source>
</reference>
<organism>
    <name type="scientific">Bordetella bronchiseptica (strain ATCC BAA-588 / NCTC 13252 / RB50)</name>
    <name type="common">Alcaligenes bronchisepticus</name>
    <dbReference type="NCBI Taxonomy" id="257310"/>
    <lineage>
        <taxon>Bacteria</taxon>
        <taxon>Pseudomonadati</taxon>
        <taxon>Pseudomonadota</taxon>
        <taxon>Betaproteobacteria</taxon>
        <taxon>Burkholderiales</taxon>
        <taxon>Alcaligenaceae</taxon>
        <taxon>Bordetella</taxon>
    </lineage>
</organism>
<sequence length="512" mass="53535">MTQSALHTEFGGIAALRDALARRQVSAVELAQSGLDAAQAASGLNAFLHIDPELTLAQARAADAALAAGTAGPLAGIPIAHKDAFVTRGWRTTAGSKMLAGYASPFDATVVERLAEAGAVSLGKLNCDEFAMGSGNENSAYGPVRNPWDTRAVPGGSSGGSAAAVAARLVAAATGTDTGGSVRQPAALCGVSGIKPTYGTVSRYGMIAFGSSLDQAGPLAPSSRDLLELLDVMTGFDPRDATSLQACDGQANESGRVRRGHDAAQAGYDAAGSQPLKGLRIGVPQEYFGAGLAPDVAAAVEAALAQFEQLGAVRVPVSLPRTELAIPAYYVIAPAEASSNLARYDGVRYGHRAAQYGDLNEMISRSRAEGFGDEVKRRILIGTYVLSHGYYDAYYLQAQRLRRLIAQDFQRAFADQCDVIMGPVSPTVAKNIGDNRDDPTADWLADVYTLGVSLAGLPAMSVPCGFGGQDGRRPVGLQIIGNYFDEGRLLALADRYQQVTDWHQRAPVSQDA</sequence>
<feature type="chain" id="PRO_0000105140" description="Glutamyl-tRNA(Gln) amidotransferase subunit A">
    <location>
        <begin position="1"/>
        <end position="512"/>
    </location>
</feature>
<feature type="active site" description="Charge relay system" evidence="1">
    <location>
        <position position="82"/>
    </location>
</feature>
<feature type="active site" description="Charge relay system" evidence="1">
    <location>
        <position position="157"/>
    </location>
</feature>
<feature type="active site" description="Acyl-ester intermediate" evidence="1">
    <location>
        <position position="181"/>
    </location>
</feature>
<name>GATA_BORBR</name>
<comment type="function">
    <text evidence="1">Allows the formation of correctly charged Gln-tRNA(Gln) through the transamidation of misacylated Glu-tRNA(Gln) in organisms which lack glutaminyl-tRNA synthetase. The reaction takes place in the presence of glutamine and ATP through an activated gamma-phospho-Glu-tRNA(Gln).</text>
</comment>
<comment type="catalytic activity">
    <reaction evidence="1">
        <text>L-glutamyl-tRNA(Gln) + L-glutamine + ATP + H2O = L-glutaminyl-tRNA(Gln) + L-glutamate + ADP + phosphate + H(+)</text>
        <dbReference type="Rhea" id="RHEA:17521"/>
        <dbReference type="Rhea" id="RHEA-COMP:9681"/>
        <dbReference type="Rhea" id="RHEA-COMP:9684"/>
        <dbReference type="ChEBI" id="CHEBI:15377"/>
        <dbReference type="ChEBI" id="CHEBI:15378"/>
        <dbReference type="ChEBI" id="CHEBI:29985"/>
        <dbReference type="ChEBI" id="CHEBI:30616"/>
        <dbReference type="ChEBI" id="CHEBI:43474"/>
        <dbReference type="ChEBI" id="CHEBI:58359"/>
        <dbReference type="ChEBI" id="CHEBI:78520"/>
        <dbReference type="ChEBI" id="CHEBI:78521"/>
        <dbReference type="ChEBI" id="CHEBI:456216"/>
        <dbReference type="EC" id="6.3.5.7"/>
    </reaction>
</comment>
<comment type="subunit">
    <text evidence="1">Heterotrimer of A, B and C subunits.</text>
</comment>
<comment type="similarity">
    <text evidence="1">Belongs to the amidase family. GatA subfamily.</text>
</comment>